<dbReference type="EMBL" id="CP000667">
    <property type="protein sequence ID" value="ABP54312.1"/>
    <property type="molecule type" value="Genomic_DNA"/>
</dbReference>
<dbReference type="SMR" id="A4X612"/>
<dbReference type="STRING" id="369723.Strop_1850"/>
<dbReference type="KEGG" id="stp:Strop_1850"/>
<dbReference type="eggNOG" id="COG0781">
    <property type="taxonomic scope" value="Bacteria"/>
</dbReference>
<dbReference type="HOGENOM" id="CLU_087843_2_3_11"/>
<dbReference type="Proteomes" id="UP000000235">
    <property type="component" value="Chromosome"/>
</dbReference>
<dbReference type="GO" id="GO:0005829">
    <property type="term" value="C:cytosol"/>
    <property type="evidence" value="ECO:0007669"/>
    <property type="project" value="TreeGrafter"/>
</dbReference>
<dbReference type="GO" id="GO:0003723">
    <property type="term" value="F:RNA binding"/>
    <property type="evidence" value="ECO:0007669"/>
    <property type="project" value="UniProtKB-UniRule"/>
</dbReference>
<dbReference type="GO" id="GO:0006353">
    <property type="term" value="P:DNA-templated transcription termination"/>
    <property type="evidence" value="ECO:0007669"/>
    <property type="project" value="UniProtKB-UniRule"/>
</dbReference>
<dbReference type="GO" id="GO:0031564">
    <property type="term" value="P:transcription antitermination"/>
    <property type="evidence" value="ECO:0007669"/>
    <property type="project" value="UniProtKB-KW"/>
</dbReference>
<dbReference type="Gene3D" id="1.10.940.10">
    <property type="entry name" value="NusB-like"/>
    <property type="match status" value="1"/>
</dbReference>
<dbReference type="HAMAP" id="MF_00073">
    <property type="entry name" value="NusB"/>
    <property type="match status" value="1"/>
</dbReference>
<dbReference type="InterPro" id="IPR035926">
    <property type="entry name" value="NusB-like_sf"/>
</dbReference>
<dbReference type="InterPro" id="IPR011605">
    <property type="entry name" value="NusB_fam"/>
</dbReference>
<dbReference type="InterPro" id="IPR006027">
    <property type="entry name" value="NusB_RsmB_TIM44"/>
</dbReference>
<dbReference type="NCBIfam" id="TIGR01951">
    <property type="entry name" value="nusB"/>
    <property type="match status" value="1"/>
</dbReference>
<dbReference type="PANTHER" id="PTHR11078:SF3">
    <property type="entry name" value="ANTITERMINATION NUSB DOMAIN-CONTAINING PROTEIN"/>
    <property type="match status" value="1"/>
</dbReference>
<dbReference type="PANTHER" id="PTHR11078">
    <property type="entry name" value="N UTILIZATION SUBSTANCE PROTEIN B-RELATED"/>
    <property type="match status" value="1"/>
</dbReference>
<dbReference type="Pfam" id="PF01029">
    <property type="entry name" value="NusB"/>
    <property type="match status" value="1"/>
</dbReference>
<dbReference type="SUPFAM" id="SSF48013">
    <property type="entry name" value="NusB-like"/>
    <property type="match status" value="1"/>
</dbReference>
<organism>
    <name type="scientific">Salinispora tropica (strain ATCC BAA-916 / DSM 44818 / JCM 13857 / NBRC 105044 / CNB-440)</name>
    <dbReference type="NCBI Taxonomy" id="369723"/>
    <lineage>
        <taxon>Bacteria</taxon>
        <taxon>Bacillati</taxon>
        <taxon>Actinomycetota</taxon>
        <taxon>Actinomycetes</taxon>
        <taxon>Micromonosporales</taxon>
        <taxon>Micromonosporaceae</taxon>
        <taxon>Salinispora</taxon>
    </lineage>
</organism>
<gene>
    <name evidence="1" type="primary">nusB</name>
    <name type="ordered locus">Strop_1850</name>
</gene>
<proteinExistence type="inferred from homology"/>
<reference key="1">
    <citation type="journal article" date="2007" name="Proc. Natl. Acad. Sci. U.S.A.">
        <title>Genome sequencing reveals complex secondary metabolome in the marine actinomycete Salinispora tropica.</title>
        <authorList>
            <person name="Udwary D.W."/>
            <person name="Zeigler L."/>
            <person name="Asolkar R.N."/>
            <person name="Singan V."/>
            <person name="Lapidus A."/>
            <person name="Fenical W."/>
            <person name="Jensen P.R."/>
            <person name="Moore B.S."/>
        </authorList>
    </citation>
    <scope>NUCLEOTIDE SEQUENCE [LARGE SCALE GENOMIC DNA]</scope>
    <source>
        <strain>ATCC BAA-916 / DSM 44818 / JCM 13857 / NBRC 105044 / CNB-440</strain>
    </source>
</reference>
<protein>
    <recommendedName>
        <fullName evidence="1">Transcription antitermination protein NusB</fullName>
    </recommendedName>
    <alternativeName>
        <fullName evidence="1">Antitermination factor NusB</fullName>
    </alternativeName>
</protein>
<sequence length="136" mass="15295">MPARRKARKRALDVLFEADLRGRPPVEVLAGYVERIEKPRPEHLGYAVGLVEGVAARLDRVDELIASYAEGWTLDRMPTVDRNLARIAVYELLYVDEIDDAVAISEAVELARQMSTDDSPRFLNGLLGRIAEYATR</sequence>
<accession>A4X612</accession>
<evidence type="ECO:0000255" key="1">
    <source>
        <dbReference type="HAMAP-Rule" id="MF_00073"/>
    </source>
</evidence>
<keyword id="KW-1185">Reference proteome</keyword>
<keyword id="KW-0694">RNA-binding</keyword>
<keyword id="KW-0804">Transcription</keyword>
<keyword id="KW-0889">Transcription antitermination</keyword>
<keyword id="KW-0805">Transcription regulation</keyword>
<name>NUSB_SALTO</name>
<comment type="function">
    <text evidence="1">Involved in transcription antitermination. Required for transcription of ribosomal RNA (rRNA) genes. Binds specifically to the boxA antiterminator sequence of the ribosomal RNA (rrn) operons.</text>
</comment>
<comment type="similarity">
    <text evidence="1">Belongs to the NusB family.</text>
</comment>
<feature type="chain" id="PRO_1000075202" description="Transcription antitermination protein NusB">
    <location>
        <begin position="1"/>
        <end position="136"/>
    </location>
</feature>